<gene>
    <name evidence="1" type="primary">prmA</name>
    <name type="ordered locus">NGO_0043</name>
</gene>
<reference key="1">
    <citation type="submission" date="2003-03" db="EMBL/GenBank/DDBJ databases">
        <title>The complete genome sequence of Neisseria gonorrhoeae.</title>
        <authorList>
            <person name="Lewis L.A."/>
            <person name="Gillaspy A.F."/>
            <person name="McLaughlin R.E."/>
            <person name="Gipson M."/>
            <person name="Ducey T.F."/>
            <person name="Ownbey T."/>
            <person name="Hartman K."/>
            <person name="Nydick C."/>
            <person name="Carson M.B."/>
            <person name="Vaughn J."/>
            <person name="Thomson C."/>
            <person name="Song L."/>
            <person name="Lin S."/>
            <person name="Yuan X."/>
            <person name="Najar F."/>
            <person name="Zhan M."/>
            <person name="Ren Q."/>
            <person name="Zhu H."/>
            <person name="Qi S."/>
            <person name="Kenton S.M."/>
            <person name="Lai H."/>
            <person name="White J.D."/>
            <person name="Clifton S."/>
            <person name="Roe B.A."/>
            <person name="Dyer D.W."/>
        </authorList>
    </citation>
    <scope>NUCLEOTIDE SEQUENCE [LARGE SCALE GENOMIC DNA]</scope>
    <source>
        <strain>ATCC 700825 / FA 1090</strain>
    </source>
</reference>
<dbReference type="EC" id="2.1.1.-" evidence="1"/>
<dbReference type="EMBL" id="AE004969">
    <property type="protein sequence ID" value="AAW88810.1"/>
    <property type="molecule type" value="Genomic_DNA"/>
</dbReference>
<dbReference type="RefSeq" id="WP_010950979.1">
    <property type="nucleotide sequence ID" value="NC_002946.2"/>
</dbReference>
<dbReference type="RefSeq" id="YP_207222.1">
    <property type="nucleotide sequence ID" value="NC_002946.2"/>
</dbReference>
<dbReference type="SMR" id="Q5FAH7"/>
<dbReference type="STRING" id="242231.NGO_0043"/>
<dbReference type="KEGG" id="ngo:NGO_0043"/>
<dbReference type="PATRIC" id="fig|242231.10.peg.47"/>
<dbReference type="HOGENOM" id="CLU_049382_4_1_4"/>
<dbReference type="Proteomes" id="UP000000535">
    <property type="component" value="Chromosome"/>
</dbReference>
<dbReference type="GO" id="GO:0005829">
    <property type="term" value="C:cytosol"/>
    <property type="evidence" value="ECO:0007669"/>
    <property type="project" value="TreeGrafter"/>
</dbReference>
<dbReference type="GO" id="GO:0016279">
    <property type="term" value="F:protein-lysine N-methyltransferase activity"/>
    <property type="evidence" value="ECO:0007669"/>
    <property type="project" value="TreeGrafter"/>
</dbReference>
<dbReference type="GO" id="GO:0032259">
    <property type="term" value="P:methylation"/>
    <property type="evidence" value="ECO:0007669"/>
    <property type="project" value="UniProtKB-KW"/>
</dbReference>
<dbReference type="CDD" id="cd02440">
    <property type="entry name" value="AdoMet_MTases"/>
    <property type="match status" value="1"/>
</dbReference>
<dbReference type="Gene3D" id="3.40.50.150">
    <property type="entry name" value="Vaccinia Virus protein VP39"/>
    <property type="match status" value="1"/>
</dbReference>
<dbReference type="HAMAP" id="MF_00735">
    <property type="entry name" value="Methyltr_PrmA"/>
    <property type="match status" value="1"/>
</dbReference>
<dbReference type="InterPro" id="IPR050078">
    <property type="entry name" value="Ribosomal_L11_MeTrfase_PrmA"/>
</dbReference>
<dbReference type="InterPro" id="IPR004498">
    <property type="entry name" value="Ribosomal_PrmA_MeTrfase"/>
</dbReference>
<dbReference type="InterPro" id="IPR029063">
    <property type="entry name" value="SAM-dependent_MTases_sf"/>
</dbReference>
<dbReference type="NCBIfam" id="TIGR00406">
    <property type="entry name" value="prmA"/>
    <property type="match status" value="1"/>
</dbReference>
<dbReference type="PANTHER" id="PTHR43648">
    <property type="entry name" value="ELECTRON TRANSFER FLAVOPROTEIN BETA SUBUNIT LYSINE METHYLTRANSFERASE"/>
    <property type="match status" value="1"/>
</dbReference>
<dbReference type="PANTHER" id="PTHR43648:SF1">
    <property type="entry name" value="ELECTRON TRANSFER FLAVOPROTEIN BETA SUBUNIT LYSINE METHYLTRANSFERASE"/>
    <property type="match status" value="1"/>
</dbReference>
<dbReference type="Pfam" id="PF06325">
    <property type="entry name" value="PrmA"/>
    <property type="match status" value="1"/>
</dbReference>
<dbReference type="PIRSF" id="PIRSF000401">
    <property type="entry name" value="RPL11_MTase"/>
    <property type="match status" value="1"/>
</dbReference>
<dbReference type="SUPFAM" id="SSF53335">
    <property type="entry name" value="S-adenosyl-L-methionine-dependent methyltransferases"/>
    <property type="match status" value="1"/>
</dbReference>
<protein>
    <recommendedName>
        <fullName evidence="1">Ribosomal protein L11 methyltransferase</fullName>
        <shortName evidence="1">L11 Mtase</shortName>
        <ecNumber evidence="1">2.1.1.-</ecNumber>
    </recommendedName>
</protein>
<proteinExistence type="inferred from homology"/>
<feature type="chain" id="PRO_1000046049" description="Ribosomal protein L11 methyltransferase">
    <location>
        <begin position="1"/>
        <end position="295"/>
    </location>
</feature>
<feature type="binding site" evidence="1">
    <location>
        <position position="150"/>
    </location>
    <ligand>
        <name>S-adenosyl-L-methionine</name>
        <dbReference type="ChEBI" id="CHEBI:59789"/>
    </ligand>
</feature>
<feature type="binding site" evidence="1">
    <location>
        <position position="171"/>
    </location>
    <ligand>
        <name>S-adenosyl-L-methionine</name>
        <dbReference type="ChEBI" id="CHEBI:59789"/>
    </ligand>
</feature>
<feature type="binding site" evidence="1">
    <location>
        <position position="193"/>
    </location>
    <ligand>
        <name>S-adenosyl-L-methionine</name>
        <dbReference type="ChEBI" id="CHEBI:59789"/>
    </ligand>
</feature>
<feature type="binding site" evidence="1">
    <location>
        <position position="232"/>
    </location>
    <ligand>
        <name>S-adenosyl-L-methionine</name>
        <dbReference type="ChEBI" id="CHEBI:59789"/>
    </ligand>
</feature>
<name>PRMA_NEIG1</name>
<organism>
    <name type="scientific">Neisseria gonorrhoeae (strain ATCC 700825 / FA 1090)</name>
    <dbReference type="NCBI Taxonomy" id="242231"/>
    <lineage>
        <taxon>Bacteria</taxon>
        <taxon>Pseudomonadati</taxon>
        <taxon>Pseudomonadota</taxon>
        <taxon>Betaproteobacteria</taxon>
        <taxon>Neisseriales</taxon>
        <taxon>Neisseriaceae</taxon>
        <taxon>Neisseria</taxon>
    </lineage>
</organism>
<sequence length="295" mass="31879">MPYQQITVNVNDAVAERLADALMEHGALSAAIEDACAGTQNEQAIFGEPGMPTEQIWQQSKVIALFGEHDEAAAVIDAAAQECGLKDLAYTGETIENQDWVRLTQSQFDPIRISDRLWITPSWHEAPEGCAVNLRLDPGLAFGTGSHPTTRLCLKWLDTQLKNGESVLDYGCGSGILTIAALKLGAGSAVGVDIDEQAVRSGRDNAEQNNVDAQFFLPDSLPQGQFDVVVANILANPLRMLGEMLAARTKQGGRIVLSGLLDEQAEELGGIYSQWFDLDPAETDEGWARLSGVKR</sequence>
<comment type="function">
    <text evidence="1">Methylates ribosomal protein L11.</text>
</comment>
<comment type="catalytic activity">
    <reaction evidence="1">
        <text>L-lysyl-[protein] + 3 S-adenosyl-L-methionine = N(6),N(6),N(6)-trimethyl-L-lysyl-[protein] + 3 S-adenosyl-L-homocysteine + 3 H(+)</text>
        <dbReference type="Rhea" id="RHEA:54192"/>
        <dbReference type="Rhea" id="RHEA-COMP:9752"/>
        <dbReference type="Rhea" id="RHEA-COMP:13826"/>
        <dbReference type="ChEBI" id="CHEBI:15378"/>
        <dbReference type="ChEBI" id="CHEBI:29969"/>
        <dbReference type="ChEBI" id="CHEBI:57856"/>
        <dbReference type="ChEBI" id="CHEBI:59789"/>
        <dbReference type="ChEBI" id="CHEBI:61961"/>
    </reaction>
</comment>
<comment type="subcellular location">
    <subcellularLocation>
        <location evidence="1">Cytoplasm</location>
    </subcellularLocation>
</comment>
<comment type="similarity">
    <text evidence="1">Belongs to the methyltransferase superfamily. PrmA family.</text>
</comment>
<keyword id="KW-0963">Cytoplasm</keyword>
<keyword id="KW-0489">Methyltransferase</keyword>
<keyword id="KW-1185">Reference proteome</keyword>
<keyword id="KW-0949">S-adenosyl-L-methionine</keyword>
<keyword id="KW-0808">Transferase</keyword>
<evidence type="ECO:0000255" key="1">
    <source>
        <dbReference type="HAMAP-Rule" id="MF_00735"/>
    </source>
</evidence>
<accession>Q5FAH7</accession>